<dbReference type="EC" id="2.1.1.182" evidence="1"/>
<dbReference type="EMBL" id="CP001649">
    <property type="protein sequence ID" value="ACS79667.1"/>
    <property type="molecule type" value="Genomic_DNA"/>
</dbReference>
<dbReference type="RefSeq" id="WP_015851485.1">
    <property type="nucleotide sequence ID" value="NC_012881.1"/>
</dbReference>
<dbReference type="SMR" id="C6BSW3"/>
<dbReference type="STRING" id="526222.Desal_1605"/>
<dbReference type="KEGG" id="dsa:Desal_1605"/>
<dbReference type="eggNOG" id="COG0030">
    <property type="taxonomic scope" value="Bacteria"/>
</dbReference>
<dbReference type="HOGENOM" id="CLU_041220_0_1_7"/>
<dbReference type="OrthoDB" id="9814755at2"/>
<dbReference type="Proteomes" id="UP000002601">
    <property type="component" value="Chromosome"/>
</dbReference>
<dbReference type="GO" id="GO:0005829">
    <property type="term" value="C:cytosol"/>
    <property type="evidence" value="ECO:0007669"/>
    <property type="project" value="TreeGrafter"/>
</dbReference>
<dbReference type="GO" id="GO:0052908">
    <property type="term" value="F:16S rRNA (adenine(1518)-N(6)/adenine(1519)-N(6))-dimethyltransferase activity"/>
    <property type="evidence" value="ECO:0007669"/>
    <property type="project" value="UniProtKB-EC"/>
</dbReference>
<dbReference type="GO" id="GO:0003723">
    <property type="term" value="F:RNA binding"/>
    <property type="evidence" value="ECO:0007669"/>
    <property type="project" value="UniProtKB-KW"/>
</dbReference>
<dbReference type="Gene3D" id="1.10.8.100">
    <property type="entry name" value="Ribosomal RNA adenine dimethylase-like, domain 2"/>
    <property type="match status" value="1"/>
</dbReference>
<dbReference type="Gene3D" id="3.40.50.150">
    <property type="entry name" value="Vaccinia Virus protein VP39"/>
    <property type="match status" value="1"/>
</dbReference>
<dbReference type="HAMAP" id="MF_00607">
    <property type="entry name" value="16SrRNA_methyltr_A"/>
    <property type="match status" value="1"/>
</dbReference>
<dbReference type="InterPro" id="IPR001737">
    <property type="entry name" value="KsgA/Erm"/>
</dbReference>
<dbReference type="InterPro" id="IPR023165">
    <property type="entry name" value="rRNA_Ade_diMease-like_C"/>
</dbReference>
<dbReference type="InterPro" id="IPR020596">
    <property type="entry name" value="rRNA_Ade_Mease_Trfase_CS"/>
</dbReference>
<dbReference type="InterPro" id="IPR020598">
    <property type="entry name" value="rRNA_Ade_methylase_Trfase_N"/>
</dbReference>
<dbReference type="InterPro" id="IPR011530">
    <property type="entry name" value="rRNA_adenine_dimethylase"/>
</dbReference>
<dbReference type="InterPro" id="IPR029063">
    <property type="entry name" value="SAM-dependent_MTases_sf"/>
</dbReference>
<dbReference type="NCBIfam" id="TIGR00755">
    <property type="entry name" value="ksgA"/>
    <property type="match status" value="1"/>
</dbReference>
<dbReference type="PANTHER" id="PTHR11727">
    <property type="entry name" value="DIMETHYLADENOSINE TRANSFERASE"/>
    <property type="match status" value="1"/>
</dbReference>
<dbReference type="PANTHER" id="PTHR11727:SF7">
    <property type="entry name" value="DIMETHYLADENOSINE TRANSFERASE-RELATED"/>
    <property type="match status" value="1"/>
</dbReference>
<dbReference type="Pfam" id="PF00398">
    <property type="entry name" value="RrnaAD"/>
    <property type="match status" value="1"/>
</dbReference>
<dbReference type="SMART" id="SM00650">
    <property type="entry name" value="rADc"/>
    <property type="match status" value="1"/>
</dbReference>
<dbReference type="SUPFAM" id="SSF53335">
    <property type="entry name" value="S-adenosyl-L-methionine-dependent methyltransferases"/>
    <property type="match status" value="1"/>
</dbReference>
<dbReference type="PROSITE" id="PS01131">
    <property type="entry name" value="RRNA_A_DIMETH"/>
    <property type="match status" value="1"/>
</dbReference>
<dbReference type="PROSITE" id="PS51689">
    <property type="entry name" value="SAM_RNA_A_N6_MT"/>
    <property type="match status" value="1"/>
</dbReference>
<comment type="function">
    <text evidence="1">Specifically dimethylates two adjacent adenosines (A1518 and A1519) in the loop of a conserved hairpin near the 3'-end of 16S rRNA in the 30S particle. May play a critical role in biogenesis of 30S subunits.</text>
</comment>
<comment type="catalytic activity">
    <reaction evidence="1">
        <text>adenosine(1518)/adenosine(1519) in 16S rRNA + 4 S-adenosyl-L-methionine = N(6)-dimethyladenosine(1518)/N(6)-dimethyladenosine(1519) in 16S rRNA + 4 S-adenosyl-L-homocysteine + 4 H(+)</text>
        <dbReference type="Rhea" id="RHEA:19609"/>
        <dbReference type="Rhea" id="RHEA-COMP:10232"/>
        <dbReference type="Rhea" id="RHEA-COMP:10233"/>
        <dbReference type="ChEBI" id="CHEBI:15378"/>
        <dbReference type="ChEBI" id="CHEBI:57856"/>
        <dbReference type="ChEBI" id="CHEBI:59789"/>
        <dbReference type="ChEBI" id="CHEBI:74411"/>
        <dbReference type="ChEBI" id="CHEBI:74493"/>
        <dbReference type="EC" id="2.1.1.182"/>
    </reaction>
</comment>
<comment type="subcellular location">
    <subcellularLocation>
        <location evidence="1">Cytoplasm</location>
    </subcellularLocation>
</comment>
<comment type="similarity">
    <text evidence="1">Belongs to the class I-like SAM-binding methyltransferase superfamily. rRNA adenine N(6)-methyltransferase family. RsmA subfamily.</text>
</comment>
<accession>C6BSW3</accession>
<organism>
    <name type="scientific">Maridesulfovibrio salexigens (strain ATCC 14822 / DSM 2638 / NCIMB 8403 / VKM B-1763)</name>
    <name type="common">Desulfovibrio salexigens</name>
    <dbReference type="NCBI Taxonomy" id="526222"/>
    <lineage>
        <taxon>Bacteria</taxon>
        <taxon>Pseudomonadati</taxon>
        <taxon>Thermodesulfobacteriota</taxon>
        <taxon>Desulfovibrionia</taxon>
        <taxon>Desulfovibrionales</taxon>
        <taxon>Desulfovibrionaceae</taxon>
        <taxon>Maridesulfovibrio</taxon>
    </lineage>
</organism>
<sequence length="262" mass="29496">MQTRHRAKKSLGQNFLQDANIARKIVDSLKITENDSIIEIGPGQGALTKFILEAGPESLTLVEKDRDLAPALEAEYPEARVELEDALKFDWAGLDPDRNWKIVGNLPYNVASKIMWDIAAQCNATCVFMVQHEVAQRVTSGPGSKKYGAISVWIQSFCRTDYLFKVPPTVFKPKPKVDSAVIKFFPLPEEEKPSDIEGLAKLVKYCFQYRRKQLGKILKSFISDAVIQWAEKEGVSLTDRPEALSPLQFQSLYKSVKNDFPS</sequence>
<keyword id="KW-0963">Cytoplasm</keyword>
<keyword id="KW-0489">Methyltransferase</keyword>
<keyword id="KW-1185">Reference proteome</keyword>
<keyword id="KW-0694">RNA-binding</keyword>
<keyword id="KW-0698">rRNA processing</keyword>
<keyword id="KW-0949">S-adenosyl-L-methionine</keyword>
<keyword id="KW-0808">Transferase</keyword>
<gene>
    <name evidence="1" type="primary">rsmA</name>
    <name evidence="1" type="synonym">ksgA</name>
    <name type="ordered locus">Desal_1605</name>
</gene>
<evidence type="ECO:0000255" key="1">
    <source>
        <dbReference type="HAMAP-Rule" id="MF_00607"/>
    </source>
</evidence>
<reference key="1">
    <citation type="submission" date="2009-06" db="EMBL/GenBank/DDBJ databases">
        <title>Complete sequence of Desulfovibrio salexigens DSM 2638.</title>
        <authorList>
            <consortium name="US DOE Joint Genome Institute"/>
            <person name="Lucas S."/>
            <person name="Copeland A."/>
            <person name="Lapidus A."/>
            <person name="Glavina del Rio T."/>
            <person name="Tice H."/>
            <person name="Bruce D."/>
            <person name="Goodwin L."/>
            <person name="Pitluck S."/>
            <person name="Munk A.C."/>
            <person name="Brettin T."/>
            <person name="Detter J.C."/>
            <person name="Han C."/>
            <person name="Tapia R."/>
            <person name="Larimer F."/>
            <person name="Land M."/>
            <person name="Hauser L."/>
            <person name="Kyrpides N."/>
            <person name="Anderson I."/>
            <person name="Wall J.D."/>
            <person name="Arkin A.P."/>
            <person name="Dehal P."/>
            <person name="Chivian D."/>
            <person name="Giles B."/>
            <person name="Hazen T.C."/>
        </authorList>
    </citation>
    <scope>NUCLEOTIDE SEQUENCE [LARGE SCALE GENOMIC DNA]</scope>
    <source>
        <strain>ATCC 14822 / DSM 2638 / NCIMB 8403 / VKM B-1763</strain>
    </source>
</reference>
<protein>
    <recommendedName>
        <fullName evidence="1">Ribosomal RNA small subunit methyltransferase A</fullName>
        <ecNumber evidence="1">2.1.1.182</ecNumber>
    </recommendedName>
    <alternativeName>
        <fullName evidence="1">16S rRNA (adenine(1518)-N(6)/adenine(1519)-N(6))-dimethyltransferase</fullName>
    </alternativeName>
    <alternativeName>
        <fullName evidence="1">16S rRNA dimethyladenosine transferase</fullName>
    </alternativeName>
    <alternativeName>
        <fullName evidence="1">16S rRNA dimethylase</fullName>
    </alternativeName>
    <alternativeName>
        <fullName evidence="1">S-adenosylmethionine-6-N', N'-adenosyl(rRNA) dimethyltransferase</fullName>
    </alternativeName>
</protein>
<feature type="chain" id="PRO_1000212243" description="Ribosomal RNA small subunit methyltransferase A">
    <location>
        <begin position="1"/>
        <end position="262"/>
    </location>
</feature>
<feature type="binding site" evidence="1">
    <location>
        <position position="14"/>
    </location>
    <ligand>
        <name>S-adenosyl-L-methionine</name>
        <dbReference type="ChEBI" id="CHEBI:59789"/>
    </ligand>
</feature>
<feature type="binding site" evidence="1">
    <location>
        <position position="16"/>
    </location>
    <ligand>
        <name>S-adenosyl-L-methionine</name>
        <dbReference type="ChEBI" id="CHEBI:59789"/>
    </ligand>
</feature>
<feature type="binding site" evidence="1">
    <location>
        <position position="41"/>
    </location>
    <ligand>
        <name>S-adenosyl-L-methionine</name>
        <dbReference type="ChEBI" id="CHEBI:59789"/>
    </ligand>
</feature>
<feature type="binding site" evidence="1">
    <location>
        <position position="63"/>
    </location>
    <ligand>
        <name>S-adenosyl-L-methionine</name>
        <dbReference type="ChEBI" id="CHEBI:59789"/>
    </ligand>
</feature>
<feature type="binding site" evidence="1">
    <location>
        <position position="85"/>
    </location>
    <ligand>
        <name>S-adenosyl-L-methionine</name>
        <dbReference type="ChEBI" id="CHEBI:59789"/>
    </ligand>
</feature>
<feature type="binding site" evidence="1">
    <location>
        <position position="105"/>
    </location>
    <ligand>
        <name>S-adenosyl-L-methionine</name>
        <dbReference type="ChEBI" id="CHEBI:59789"/>
    </ligand>
</feature>
<name>RSMA_MARSD</name>
<proteinExistence type="inferred from homology"/>